<proteinExistence type="evidence at protein level"/>
<comment type="function">
    <text evidence="1">Chloroplast-localized elongation factor EF-G involved in protein synthesis in plastids. Catalyzes the GTP-dependent ribosomal translocation step during translation elongation. During this step, the ribosome changes from the pre-translocational (PRE) to the post-translocational (POST) state as the newly formed A-site-bound peptidyl-tRNA and P-site-bound deacylated tRNA move to the P and E sites, respectively. Catalyzes the coordinated movement of the two tRNA molecules, the mRNA and conformational changes in the ribosome (By similarity).</text>
</comment>
<comment type="pathway">
    <text>Protein biosynthesis; polypeptide chain elongation.</text>
</comment>
<comment type="subcellular location">
    <subcellularLocation>
        <location evidence="2">Plastid</location>
        <location evidence="2">Chloroplast</location>
    </subcellularLocation>
</comment>
<comment type="similarity">
    <text evidence="3">Belongs to the GTP-binding elongation factor family. EF-G/EF-2 subfamily.</text>
</comment>
<accession>P86349</accession>
<protein>
    <recommendedName>
        <fullName evidence="2">Elongation factor G, chloroplastic</fullName>
        <shortName>cEF-G</shortName>
    </recommendedName>
</protein>
<name>EFGC_ARAHY</name>
<sequence>NFSVFAMSADGDAKILYYTGRNKAIVWSGEELGAKLAQEDPSFHFSRVEANVGAPQVNYRQSGGQGQFADITVRFEPMDPGSGYEFKMLEPIMKRGQINSFGDKPGGLK</sequence>
<evidence type="ECO:0000250" key="1"/>
<evidence type="ECO:0000250" key="2">
    <source>
        <dbReference type="UniProtKB" id="P34811"/>
    </source>
</evidence>
<evidence type="ECO:0000255" key="3"/>
<evidence type="ECO:0000305" key="4"/>
<reference evidence="4" key="1">
    <citation type="journal article" date="2010" name="J. Proteome Res.">
        <title>Analysis of peanut leaf proteome.</title>
        <authorList>
            <person name="Katam R."/>
            <person name="Basha S.M."/>
            <person name="Suravajhala P."/>
            <person name="Pechan T."/>
        </authorList>
    </citation>
    <scope>PROTEIN SEQUENCE</scope>
    <scope>IDENTIFICATION BY MASS SPECTROMETRY</scope>
    <source>
        <strain>cv. Vemana</strain>
        <tissue>Leaf</tissue>
    </source>
</reference>
<keyword id="KW-0150">Chloroplast</keyword>
<keyword id="KW-0903">Direct protein sequencing</keyword>
<keyword id="KW-0251">Elongation factor</keyword>
<keyword id="KW-0342">GTP-binding</keyword>
<keyword id="KW-0547">Nucleotide-binding</keyword>
<keyword id="KW-0934">Plastid</keyword>
<keyword id="KW-0648">Protein biosynthesis</keyword>
<feature type="chain" id="PRO_0000405238" description="Elongation factor G, chloroplastic">
    <location>
        <begin position="1" status="less than"/>
        <end position="109" status="greater than"/>
    </location>
</feature>
<feature type="non-consecutive residues" evidence="4">
    <location>
        <begin position="14"/>
        <end position="15"/>
    </location>
</feature>
<feature type="non-consecutive residues" evidence="4">
    <location>
        <begin position="21"/>
        <end position="22"/>
    </location>
</feature>
<feature type="non-consecutive residues" evidence="4">
    <location>
        <begin position="35"/>
        <end position="36"/>
    </location>
</feature>
<feature type="non-consecutive residues" evidence="4">
    <location>
        <begin position="47"/>
        <end position="48"/>
    </location>
</feature>
<feature type="non-consecutive residues" evidence="4">
    <location>
        <begin position="60"/>
        <end position="61"/>
    </location>
</feature>
<feature type="non-consecutive residues" evidence="4">
    <location>
        <begin position="87"/>
        <end position="88"/>
    </location>
</feature>
<feature type="non-consecutive residues" evidence="4">
    <location>
        <begin position="94"/>
        <end position="95"/>
    </location>
</feature>
<feature type="non-terminal residue">
    <location>
        <position position="1"/>
    </location>
</feature>
<feature type="non-terminal residue">
    <location>
        <position position="109"/>
    </location>
</feature>
<dbReference type="UniPathway" id="UPA00345"/>
<dbReference type="GO" id="GO:0009507">
    <property type="term" value="C:chloroplast"/>
    <property type="evidence" value="ECO:0007669"/>
    <property type="project" value="UniProtKB-SubCell"/>
</dbReference>
<dbReference type="GO" id="GO:0005525">
    <property type="term" value="F:GTP binding"/>
    <property type="evidence" value="ECO:0007669"/>
    <property type="project" value="UniProtKB-KW"/>
</dbReference>
<dbReference type="GO" id="GO:0003746">
    <property type="term" value="F:translation elongation factor activity"/>
    <property type="evidence" value="ECO:0007669"/>
    <property type="project" value="UniProtKB-KW"/>
</dbReference>
<dbReference type="Gene3D" id="3.30.230.10">
    <property type="match status" value="1"/>
</dbReference>
<dbReference type="InterPro" id="IPR020568">
    <property type="entry name" value="Ribosomal_Su5_D2-typ_SF"/>
</dbReference>
<dbReference type="InterPro" id="IPR014721">
    <property type="entry name" value="Ribsml_uS5_D2-typ_fold_subgr"/>
</dbReference>
<dbReference type="SUPFAM" id="SSF54211">
    <property type="entry name" value="Ribosomal protein S5 domain 2-like"/>
    <property type="match status" value="1"/>
</dbReference>
<organism>
    <name type="scientific">Arachis hypogaea</name>
    <name type="common">Peanut</name>
    <dbReference type="NCBI Taxonomy" id="3818"/>
    <lineage>
        <taxon>Eukaryota</taxon>
        <taxon>Viridiplantae</taxon>
        <taxon>Streptophyta</taxon>
        <taxon>Embryophyta</taxon>
        <taxon>Tracheophyta</taxon>
        <taxon>Spermatophyta</taxon>
        <taxon>Magnoliopsida</taxon>
        <taxon>eudicotyledons</taxon>
        <taxon>Gunneridae</taxon>
        <taxon>Pentapetalae</taxon>
        <taxon>rosids</taxon>
        <taxon>fabids</taxon>
        <taxon>Fabales</taxon>
        <taxon>Fabaceae</taxon>
        <taxon>Papilionoideae</taxon>
        <taxon>50 kb inversion clade</taxon>
        <taxon>dalbergioids sensu lato</taxon>
        <taxon>Dalbergieae</taxon>
        <taxon>Pterocarpus clade</taxon>
        <taxon>Arachis</taxon>
    </lineage>
</organism>